<reference key="1">
    <citation type="journal article" date="2004" name="Nature">
        <title>Genome sequence of the Brown Norway rat yields insights into mammalian evolution.</title>
        <authorList>
            <person name="Gibbs R.A."/>
            <person name="Weinstock G.M."/>
            <person name="Metzker M.L."/>
            <person name="Muzny D.M."/>
            <person name="Sodergren E.J."/>
            <person name="Scherer S."/>
            <person name="Scott G."/>
            <person name="Steffen D."/>
            <person name="Worley K.C."/>
            <person name="Burch P.E."/>
            <person name="Okwuonu G."/>
            <person name="Hines S."/>
            <person name="Lewis L."/>
            <person name="Deramo C."/>
            <person name="Delgado O."/>
            <person name="Dugan-Rocha S."/>
            <person name="Miner G."/>
            <person name="Morgan M."/>
            <person name="Hawes A."/>
            <person name="Gill R."/>
            <person name="Holt R.A."/>
            <person name="Adams M.D."/>
            <person name="Amanatides P.G."/>
            <person name="Baden-Tillson H."/>
            <person name="Barnstead M."/>
            <person name="Chin S."/>
            <person name="Evans C.A."/>
            <person name="Ferriera S."/>
            <person name="Fosler C."/>
            <person name="Glodek A."/>
            <person name="Gu Z."/>
            <person name="Jennings D."/>
            <person name="Kraft C.L."/>
            <person name="Nguyen T."/>
            <person name="Pfannkoch C.M."/>
            <person name="Sitter C."/>
            <person name="Sutton G.G."/>
            <person name="Venter J.C."/>
            <person name="Woodage T."/>
            <person name="Smith D."/>
            <person name="Lee H.-M."/>
            <person name="Gustafson E."/>
            <person name="Cahill P."/>
            <person name="Kana A."/>
            <person name="Doucette-Stamm L."/>
            <person name="Weinstock K."/>
            <person name="Fechtel K."/>
            <person name="Weiss R.B."/>
            <person name="Dunn D.M."/>
            <person name="Green E.D."/>
            <person name="Blakesley R.W."/>
            <person name="Bouffard G.G."/>
            <person name="De Jong P.J."/>
            <person name="Osoegawa K."/>
            <person name="Zhu B."/>
            <person name="Marra M."/>
            <person name="Schein J."/>
            <person name="Bosdet I."/>
            <person name="Fjell C."/>
            <person name="Jones S."/>
            <person name="Krzywinski M."/>
            <person name="Mathewson C."/>
            <person name="Siddiqui A."/>
            <person name="Wye N."/>
            <person name="McPherson J."/>
            <person name="Zhao S."/>
            <person name="Fraser C.M."/>
            <person name="Shetty J."/>
            <person name="Shatsman S."/>
            <person name="Geer K."/>
            <person name="Chen Y."/>
            <person name="Abramzon S."/>
            <person name="Nierman W.C."/>
            <person name="Havlak P.H."/>
            <person name="Chen R."/>
            <person name="Durbin K.J."/>
            <person name="Egan A."/>
            <person name="Ren Y."/>
            <person name="Song X.-Z."/>
            <person name="Li B."/>
            <person name="Liu Y."/>
            <person name="Qin X."/>
            <person name="Cawley S."/>
            <person name="Cooney A.J."/>
            <person name="D'Souza L.M."/>
            <person name="Martin K."/>
            <person name="Wu J.Q."/>
            <person name="Gonzalez-Garay M.L."/>
            <person name="Jackson A.R."/>
            <person name="Kalafus K.J."/>
            <person name="McLeod M.P."/>
            <person name="Milosavljevic A."/>
            <person name="Virk D."/>
            <person name="Volkov A."/>
            <person name="Wheeler D.A."/>
            <person name="Zhang Z."/>
            <person name="Bailey J.A."/>
            <person name="Eichler E.E."/>
            <person name="Tuzun E."/>
            <person name="Birney E."/>
            <person name="Mongin E."/>
            <person name="Ureta-Vidal A."/>
            <person name="Woodwark C."/>
            <person name="Zdobnov E."/>
            <person name="Bork P."/>
            <person name="Suyama M."/>
            <person name="Torrents D."/>
            <person name="Alexandersson M."/>
            <person name="Trask B.J."/>
            <person name="Young J.M."/>
            <person name="Huang H."/>
            <person name="Wang H."/>
            <person name="Xing H."/>
            <person name="Daniels S."/>
            <person name="Gietzen D."/>
            <person name="Schmidt J."/>
            <person name="Stevens K."/>
            <person name="Vitt U."/>
            <person name="Wingrove J."/>
            <person name="Camara F."/>
            <person name="Mar Alba M."/>
            <person name="Abril J.F."/>
            <person name="Guigo R."/>
            <person name="Smit A."/>
            <person name="Dubchak I."/>
            <person name="Rubin E.M."/>
            <person name="Couronne O."/>
            <person name="Poliakov A."/>
            <person name="Huebner N."/>
            <person name="Ganten D."/>
            <person name="Goesele C."/>
            <person name="Hummel O."/>
            <person name="Kreitler T."/>
            <person name="Lee Y.-A."/>
            <person name="Monti J."/>
            <person name="Schulz H."/>
            <person name="Zimdahl H."/>
            <person name="Himmelbauer H."/>
            <person name="Lehrach H."/>
            <person name="Jacob H.J."/>
            <person name="Bromberg S."/>
            <person name="Gullings-Handley J."/>
            <person name="Jensen-Seaman M.I."/>
            <person name="Kwitek A.E."/>
            <person name="Lazar J."/>
            <person name="Pasko D."/>
            <person name="Tonellato P.J."/>
            <person name="Twigger S."/>
            <person name="Ponting C.P."/>
            <person name="Duarte J.M."/>
            <person name="Rice S."/>
            <person name="Goodstadt L."/>
            <person name="Beatson S.A."/>
            <person name="Emes R.D."/>
            <person name="Winter E.E."/>
            <person name="Webber C."/>
            <person name="Brandt P."/>
            <person name="Nyakatura G."/>
            <person name="Adetobi M."/>
            <person name="Chiaromonte F."/>
            <person name="Elnitski L."/>
            <person name="Eswara P."/>
            <person name="Hardison R.C."/>
            <person name="Hou M."/>
            <person name="Kolbe D."/>
            <person name="Makova K."/>
            <person name="Miller W."/>
            <person name="Nekrutenko A."/>
            <person name="Riemer C."/>
            <person name="Schwartz S."/>
            <person name="Taylor J."/>
            <person name="Yang S."/>
            <person name="Zhang Y."/>
            <person name="Lindpaintner K."/>
            <person name="Andrews T.D."/>
            <person name="Caccamo M."/>
            <person name="Clamp M."/>
            <person name="Clarke L."/>
            <person name="Curwen V."/>
            <person name="Durbin R.M."/>
            <person name="Eyras E."/>
            <person name="Searle S.M."/>
            <person name="Cooper G.M."/>
            <person name="Batzoglou S."/>
            <person name="Brudno M."/>
            <person name="Sidow A."/>
            <person name="Stone E.A."/>
            <person name="Payseur B.A."/>
            <person name="Bourque G."/>
            <person name="Lopez-Otin C."/>
            <person name="Puente X.S."/>
            <person name="Chakrabarti K."/>
            <person name="Chatterji S."/>
            <person name="Dewey C."/>
            <person name="Pachter L."/>
            <person name="Bray N."/>
            <person name="Yap V.B."/>
            <person name="Caspi A."/>
            <person name="Tesler G."/>
            <person name="Pevzner P.A."/>
            <person name="Haussler D."/>
            <person name="Roskin K.M."/>
            <person name="Baertsch R."/>
            <person name="Clawson H."/>
            <person name="Furey T.S."/>
            <person name="Hinrichs A.S."/>
            <person name="Karolchik D."/>
            <person name="Kent W.J."/>
            <person name="Rosenbloom K.R."/>
            <person name="Trumbower H."/>
            <person name="Weirauch M."/>
            <person name="Cooper D.N."/>
            <person name="Stenson P.D."/>
            <person name="Ma B."/>
            <person name="Brent M."/>
            <person name="Arumugam M."/>
            <person name="Shteynberg D."/>
            <person name="Copley R.R."/>
            <person name="Taylor M.S."/>
            <person name="Riethman H."/>
            <person name="Mudunuri U."/>
            <person name="Peterson J."/>
            <person name="Guyer M."/>
            <person name="Felsenfeld A."/>
            <person name="Old S."/>
            <person name="Mockrin S."/>
            <person name="Collins F.S."/>
        </authorList>
    </citation>
    <scope>NUCLEOTIDE SEQUENCE [LARGE SCALE GENOMIC DNA]</scope>
    <source>
        <strain>Brown Norway</strain>
    </source>
</reference>
<reference key="2">
    <citation type="submission" date="2005-09" db="EMBL/GenBank/DDBJ databases">
        <authorList>
            <person name="Mural R.J."/>
            <person name="Adams M.D."/>
            <person name="Myers E.W."/>
            <person name="Smith H.O."/>
            <person name="Venter J.C."/>
        </authorList>
    </citation>
    <scope>NUCLEOTIDE SEQUENCE [LARGE SCALE GENOMIC DNA]</scope>
    <source>
        <strain>Brown Norway</strain>
    </source>
</reference>
<keyword id="KW-0162">Chylomicron</keyword>
<keyword id="KW-0345">HDL</keyword>
<keyword id="KW-0427">LDL</keyword>
<keyword id="KW-0442">Lipid degradation</keyword>
<keyword id="KW-0443">Lipid metabolism</keyword>
<keyword id="KW-0445">Lipid transport</keyword>
<keyword id="KW-1185">Reference proteome</keyword>
<keyword id="KW-0964">Secreted</keyword>
<keyword id="KW-0732">Signal</keyword>
<keyword id="KW-0813">Transport</keyword>
<keyword id="KW-0850">VLDL</keyword>
<name>APOC2_RAT</name>
<protein>
    <recommendedName>
        <fullName>Apolipoprotein C-II</fullName>
        <shortName>Apo-CII</shortName>
        <shortName>ApoC-II</shortName>
    </recommendedName>
    <alternativeName>
        <fullName>Apolipoprotein C2</fullName>
    </alternativeName>
    <component>
        <recommendedName>
            <fullName>Proapolipoprotein C-II</fullName>
            <shortName>ProapoC-II</shortName>
        </recommendedName>
    </component>
</protein>
<feature type="signal peptide" evidence="2">
    <location>
        <begin position="1"/>
        <end position="22"/>
    </location>
</feature>
<feature type="chain" id="PRO_0000454005" description="Proapolipoprotein C-II">
    <location>
        <begin position="23"/>
        <end position="97"/>
    </location>
</feature>
<feature type="chain" id="PRO_5015091722" description="Apolipoprotein C-II" evidence="1">
    <location>
        <begin position="26"/>
        <end position="97"/>
    </location>
</feature>
<feature type="region of interest" description="Lipid binding" evidence="1">
    <location>
        <begin position="63"/>
        <end position="71"/>
    </location>
</feature>
<feature type="region of interest" description="Lipoprotein lipase cofactor" evidence="1">
    <location>
        <begin position="75"/>
        <end position="97"/>
    </location>
</feature>
<sequence>MGSRFFLALFLALLVLGNEVQGTEEDDPGSSALLDTVQEHLFSYWNSAKAAAGELYQKTYLTSVDEKLRDMYSKSSAAMTTYAGIFTDQLLTLLKGE</sequence>
<dbReference type="EMBL" id="AABR07002678">
    <property type="status" value="NOT_ANNOTATED_CDS"/>
    <property type="molecule type" value="Genomic_DNA"/>
</dbReference>
<dbReference type="EMBL" id="CH473979">
    <property type="protein sequence ID" value="EDM08174.1"/>
    <property type="molecule type" value="Genomic_DNA"/>
</dbReference>
<dbReference type="RefSeq" id="NP_001078821.1">
    <property type="nucleotide sequence ID" value="NM_001085352.1"/>
</dbReference>
<dbReference type="SMR" id="G3V8D4"/>
<dbReference type="FunCoup" id="G3V8D4">
    <property type="interactions" value="41"/>
</dbReference>
<dbReference type="IntAct" id="G3V8D4">
    <property type="interactions" value="1"/>
</dbReference>
<dbReference type="STRING" id="10116.ENSRNOP00000024800"/>
<dbReference type="PhosphoSitePlus" id="G3V8D4"/>
<dbReference type="PaxDb" id="10116-ENSRNOP00000024800"/>
<dbReference type="Ensembl" id="ENSRNOT00000024800.8">
    <property type="protein sequence ID" value="ENSRNOP00000024800.4"/>
    <property type="gene ID" value="ENSRNOG00000018402.8"/>
</dbReference>
<dbReference type="GeneID" id="292697"/>
<dbReference type="KEGG" id="rno:292697"/>
<dbReference type="AGR" id="RGD:2135"/>
<dbReference type="CTD" id="344"/>
<dbReference type="RGD" id="2135">
    <property type="gene designation" value="Apoc2"/>
</dbReference>
<dbReference type="eggNOG" id="ENOG502SEJB">
    <property type="taxonomic scope" value="Eukaryota"/>
</dbReference>
<dbReference type="GeneTree" id="ENSGT00390000007913"/>
<dbReference type="HOGENOM" id="CLU_180154_0_0_1"/>
<dbReference type="InParanoid" id="G3V8D4"/>
<dbReference type="OMA" id="GTHEPQE"/>
<dbReference type="OrthoDB" id="84001at9989"/>
<dbReference type="TreeFam" id="TF338218"/>
<dbReference type="Reactome" id="R-RNO-8963888">
    <property type="pathway name" value="Chylomicron assembly"/>
</dbReference>
<dbReference type="Reactome" id="R-RNO-8963901">
    <property type="pathway name" value="Chylomicron remodeling"/>
</dbReference>
<dbReference type="Reactome" id="R-RNO-8964058">
    <property type="pathway name" value="HDL remodeling"/>
</dbReference>
<dbReference type="Reactome" id="R-RNO-975634">
    <property type="pathway name" value="Retinoid metabolism and transport"/>
</dbReference>
<dbReference type="PRO" id="PR:G3V8D4"/>
<dbReference type="Proteomes" id="UP000002494">
    <property type="component" value="Chromosome 1"/>
</dbReference>
<dbReference type="Proteomes" id="UP000234681">
    <property type="component" value="Chromosome 1"/>
</dbReference>
<dbReference type="Bgee" id="ENSRNOG00000018402">
    <property type="expression patterns" value="Expressed in liver and 14 other cell types or tissues"/>
</dbReference>
<dbReference type="GO" id="GO:0042627">
    <property type="term" value="C:chylomicron"/>
    <property type="evidence" value="ECO:0000266"/>
    <property type="project" value="RGD"/>
</dbReference>
<dbReference type="GO" id="GO:0005615">
    <property type="term" value="C:extracellular space"/>
    <property type="evidence" value="ECO:0000266"/>
    <property type="project" value="RGD"/>
</dbReference>
<dbReference type="GO" id="GO:0034363">
    <property type="term" value="C:intermediate-density lipoprotein particle"/>
    <property type="evidence" value="ECO:0000266"/>
    <property type="project" value="RGD"/>
</dbReference>
<dbReference type="GO" id="GO:0034362">
    <property type="term" value="C:low-density lipoprotein particle"/>
    <property type="evidence" value="ECO:0000266"/>
    <property type="project" value="RGD"/>
</dbReference>
<dbReference type="GO" id="GO:0034366">
    <property type="term" value="C:spherical high-density lipoprotein particle"/>
    <property type="evidence" value="ECO:0000266"/>
    <property type="project" value="RGD"/>
</dbReference>
<dbReference type="GO" id="GO:0034361">
    <property type="term" value="C:very-low-density lipoprotein particle"/>
    <property type="evidence" value="ECO:0000266"/>
    <property type="project" value="RGD"/>
</dbReference>
<dbReference type="GO" id="GO:0055102">
    <property type="term" value="F:lipase inhibitor activity"/>
    <property type="evidence" value="ECO:0000266"/>
    <property type="project" value="RGD"/>
</dbReference>
<dbReference type="GO" id="GO:0008289">
    <property type="term" value="F:lipid binding"/>
    <property type="evidence" value="ECO:0000266"/>
    <property type="project" value="RGD"/>
</dbReference>
<dbReference type="GO" id="GO:0060230">
    <property type="term" value="F:lipoprotein lipase activator activity"/>
    <property type="evidence" value="ECO:0000266"/>
    <property type="project" value="RGD"/>
</dbReference>
<dbReference type="GO" id="GO:0140677">
    <property type="term" value="F:molecular function activator activity"/>
    <property type="evidence" value="ECO:0000266"/>
    <property type="project" value="RGD"/>
</dbReference>
<dbReference type="GO" id="GO:0016004">
    <property type="term" value="F:phospholipase activator activity"/>
    <property type="evidence" value="ECO:0000266"/>
    <property type="project" value="RGD"/>
</dbReference>
<dbReference type="GO" id="GO:0043274">
    <property type="term" value="F:phospholipase binding"/>
    <property type="evidence" value="ECO:0000266"/>
    <property type="project" value="RGD"/>
</dbReference>
<dbReference type="GO" id="GO:0033344">
    <property type="term" value="P:cholesterol efflux"/>
    <property type="evidence" value="ECO:0000266"/>
    <property type="project" value="RGD"/>
</dbReference>
<dbReference type="GO" id="GO:0034382">
    <property type="term" value="P:chylomicron remnant clearance"/>
    <property type="evidence" value="ECO:0000266"/>
    <property type="project" value="RGD"/>
</dbReference>
<dbReference type="GO" id="GO:0034384">
    <property type="term" value="P:high-density lipoprotein particle clearance"/>
    <property type="evidence" value="ECO:0000266"/>
    <property type="project" value="RGD"/>
</dbReference>
<dbReference type="GO" id="GO:0016042">
    <property type="term" value="P:lipid catabolic process"/>
    <property type="evidence" value="ECO:0007669"/>
    <property type="project" value="UniProtKB-KW"/>
</dbReference>
<dbReference type="GO" id="GO:0042159">
    <property type="term" value="P:lipoprotein catabolic process"/>
    <property type="evidence" value="ECO:0000318"/>
    <property type="project" value="GO_Central"/>
</dbReference>
<dbReference type="GO" id="GO:0042953">
    <property type="term" value="P:lipoprotein transport"/>
    <property type="evidence" value="ECO:0000314"/>
    <property type="project" value="RGD"/>
</dbReference>
<dbReference type="GO" id="GO:0032375">
    <property type="term" value="P:negative regulation of cholesterol transport"/>
    <property type="evidence" value="ECO:0000266"/>
    <property type="project" value="RGD"/>
</dbReference>
<dbReference type="GO" id="GO:0045833">
    <property type="term" value="P:negative regulation of lipid metabolic process"/>
    <property type="evidence" value="ECO:0000266"/>
    <property type="project" value="RGD"/>
</dbReference>
<dbReference type="GO" id="GO:0048261">
    <property type="term" value="P:negative regulation of receptor-mediated endocytosis"/>
    <property type="evidence" value="ECO:0000266"/>
    <property type="project" value="RGD"/>
</dbReference>
<dbReference type="GO" id="GO:0010916">
    <property type="term" value="P:negative regulation of very-low-density lipoprotein particle clearance"/>
    <property type="evidence" value="ECO:0000266"/>
    <property type="project" value="RGD"/>
</dbReference>
<dbReference type="GO" id="GO:0033700">
    <property type="term" value="P:phospholipid efflux"/>
    <property type="evidence" value="ECO:0000266"/>
    <property type="project" value="RGD"/>
</dbReference>
<dbReference type="GO" id="GO:0045723">
    <property type="term" value="P:positive regulation of fatty acid biosynthetic process"/>
    <property type="evidence" value="ECO:0000266"/>
    <property type="project" value="RGD"/>
</dbReference>
<dbReference type="GO" id="GO:0060697">
    <property type="term" value="P:positive regulation of phospholipid catabolic process"/>
    <property type="evidence" value="ECO:0000266"/>
    <property type="project" value="RGD"/>
</dbReference>
<dbReference type="GO" id="GO:0010898">
    <property type="term" value="P:positive regulation of triglyceride catabolic process"/>
    <property type="evidence" value="ECO:0000266"/>
    <property type="project" value="RGD"/>
</dbReference>
<dbReference type="GO" id="GO:0009410">
    <property type="term" value="P:response to xenobiotic stimulus"/>
    <property type="evidence" value="ECO:0000270"/>
    <property type="project" value="RGD"/>
</dbReference>
<dbReference type="GO" id="GO:0070328">
    <property type="term" value="P:triglyceride homeostasis"/>
    <property type="evidence" value="ECO:0000266"/>
    <property type="project" value="RGD"/>
</dbReference>
<dbReference type="FunFam" id="1.10.1440.10:FF:000001">
    <property type="entry name" value="Apolipoprotein C-II"/>
    <property type="match status" value="1"/>
</dbReference>
<dbReference type="Gene3D" id="1.10.1440.10">
    <property type="entry name" value="Apolipoprotein C-II"/>
    <property type="match status" value="1"/>
</dbReference>
<dbReference type="InterPro" id="IPR008019">
    <property type="entry name" value="Apo-CII"/>
</dbReference>
<dbReference type="InterPro" id="IPR023121">
    <property type="entry name" value="ApoC-II_dom_sf"/>
</dbReference>
<dbReference type="PANTHER" id="PTHR16566">
    <property type="entry name" value="APOLIPOPROTEIN C-II"/>
    <property type="match status" value="1"/>
</dbReference>
<dbReference type="PANTHER" id="PTHR16566:SF0">
    <property type="entry name" value="APOLIPOPROTEIN C-II"/>
    <property type="match status" value="1"/>
</dbReference>
<dbReference type="Pfam" id="PF05355">
    <property type="entry name" value="Apo-CII"/>
    <property type="match status" value="1"/>
</dbReference>
<evidence type="ECO:0000250" key="1">
    <source>
        <dbReference type="UniProtKB" id="P02655"/>
    </source>
</evidence>
<evidence type="ECO:0000255" key="2"/>
<evidence type="ECO:0000305" key="3"/>
<accession>G3V8D4</accession>
<proteinExistence type="inferred from homology"/>
<organism>
    <name type="scientific">Rattus norvegicus</name>
    <name type="common">Rat</name>
    <dbReference type="NCBI Taxonomy" id="10116"/>
    <lineage>
        <taxon>Eukaryota</taxon>
        <taxon>Metazoa</taxon>
        <taxon>Chordata</taxon>
        <taxon>Craniata</taxon>
        <taxon>Vertebrata</taxon>
        <taxon>Euteleostomi</taxon>
        <taxon>Mammalia</taxon>
        <taxon>Eutheria</taxon>
        <taxon>Euarchontoglires</taxon>
        <taxon>Glires</taxon>
        <taxon>Rodentia</taxon>
        <taxon>Myomorpha</taxon>
        <taxon>Muroidea</taxon>
        <taxon>Muridae</taxon>
        <taxon>Murinae</taxon>
        <taxon>Rattus</taxon>
    </lineage>
</organism>
<comment type="function">
    <text evidence="1">Component of chylomicrons, very low-density lipoproteins (VLDL), low-density lipoproteins (LDL), and high-density lipoproteins (HDL) in plasma. Plays an important role in lipoprotein metabolism as an activator of lipoprotein lipase.</text>
</comment>
<comment type="subcellular location">
    <subcellularLocation>
        <location evidence="1">Secreted</location>
    </subcellularLocation>
</comment>
<comment type="PTM">
    <text evidence="1">Proapolipoprotein C-II is synthesized as a sialic acid containing glycoprotein which is subsequently desialylated prior to its proteolytic processing.</text>
</comment>
<comment type="PTM">
    <text evidence="1">Proapolipoprotein C-II, the major form found in plasma undergoes proteolytic cleavage of its N-terminal hexapeptide to generate the mature form apolipoprotein C-II, which occurs as the minor form in plasma.</text>
</comment>
<comment type="similarity">
    <text evidence="3">Belongs to the apolipoprotein C2 family.</text>
</comment>
<gene>
    <name type="primary">Apoc2</name>
</gene>